<dbReference type="EMBL" id="CP000462">
    <property type="protein sequence ID" value="ABK36983.1"/>
    <property type="molecule type" value="Genomic_DNA"/>
</dbReference>
<dbReference type="RefSeq" id="WP_011706244.1">
    <property type="nucleotide sequence ID" value="NC_008570.1"/>
</dbReference>
<dbReference type="RefSeq" id="YP_856925.1">
    <property type="nucleotide sequence ID" value="NC_008570.1"/>
</dbReference>
<dbReference type="SMR" id="A0KKX4"/>
<dbReference type="STRING" id="380703.AHA_2410"/>
<dbReference type="EnsemblBacteria" id="ABK36983">
    <property type="protein sequence ID" value="ABK36983"/>
    <property type="gene ID" value="AHA_2410"/>
</dbReference>
<dbReference type="GeneID" id="4488469"/>
<dbReference type="KEGG" id="aha:AHA_2410"/>
<dbReference type="PATRIC" id="fig|380703.7.peg.2407"/>
<dbReference type="eggNOG" id="COG1742">
    <property type="taxonomic scope" value="Bacteria"/>
</dbReference>
<dbReference type="HOGENOM" id="CLU_117653_2_0_6"/>
<dbReference type="OrthoDB" id="123240at2"/>
<dbReference type="Proteomes" id="UP000000756">
    <property type="component" value="Chromosome"/>
</dbReference>
<dbReference type="GO" id="GO:0005886">
    <property type="term" value="C:plasma membrane"/>
    <property type="evidence" value="ECO:0007669"/>
    <property type="project" value="UniProtKB-SubCell"/>
</dbReference>
<dbReference type="HAMAP" id="MF_00010">
    <property type="entry name" value="UPF0060"/>
    <property type="match status" value="1"/>
</dbReference>
<dbReference type="InterPro" id="IPR003844">
    <property type="entry name" value="UPF0060"/>
</dbReference>
<dbReference type="NCBIfam" id="NF002586">
    <property type="entry name" value="PRK02237.1"/>
    <property type="match status" value="1"/>
</dbReference>
<dbReference type="PANTHER" id="PTHR36116">
    <property type="entry name" value="UPF0060 MEMBRANE PROTEIN YNFA"/>
    <property type="match status" value="1"/>
</dbReference>
<dbReference type="PANTHER" id="PTHR36116:SF1">
    <property type="entry name" value="UPF0060 MEMBRANE PROTEIN YNFA"/>
    <property type="match status" value="1"/>
</dbReference>
<dbReference type="Pfam" id="PF02694">
    <property type="entry name" value="UPF0060"/>
    <property type="match status" value="1"/>
</dbReference>
<dbReference type="SUPFAM" id="SSF103481">
    <property type="entry name" value="Multidrug resistance efflux transporter EmrE"/>
    <property type="match status" value="1"/>
</dbReference>
<gene>
    <name type="ordered locus">AHA_2410</name>
</gene>
<accession>A0KKX4</accession>
<name>Y2410_AERHH</name>
<feature type="chain" id="PRO_0000282202" description="UPF0060 membrane protein AHA_2410">
    <location>
        <begin position="1"/>
        <end position="110"/>
    </location>
</feature>
<feature type="transmembrane region" description="Helical" evidence="1">
    <location>
        <begin position="8"/>
        <end position="28"/>
    </location>
</feature>
<feature type="transmembrane region" description="Helical" evidence="1">
    <location>
        <begin position="33"/>
        <end position="53"/>
    </location>
</feature>
<feature type="transmembrane region" description="Helical" evidence="1">
    <location>
        <begin position="63"/>
        <end position="83"/>
    </location>
</feature>
<feature type="transmembrane region" description="Helical" evidence="1">
    <location>
        <begin position="87"/>
        <end position="107"/>
    </location>
</feature>
<evidence type="ECO:0000255" key="1">
    <source>
        <dbReference type="HAMAP-Rule" id="MF_00010"/>
    </source>
</evidence>
<sequence>MGELKTMGLFLVTALAEILGCYLPYLWLTQGRSVWLLLPAGLSLMLFAWLLSLHPTAAGRVYAAYGGVYIFVAILWLWLVDGIRPSLWDLVGSLVALCGMAIIMFAPREA</sequence>
<organism>
    <name type="scientific">Aeromonas hydrophila subsp. hydrophila (strain ATCC 7966 / DSM 30187 / BCRC 13018 / CCUG 14551 / JCM 1027 / KCTC 2358 / NCIMB 9240 / NCTC 8049)</name>
    <dbReference type="NCBI Taxonomy" id="380703"/>
    <lineage>
        <taxon>Bacteria</taxon>
        <taxon>Pseudomonadati</taxon>
        <taxon>Pseudomonadota</taxon>
        <taxon>Gammaproteobacteria</taxon>
        <taxon>Aeromonadales</taxon>
        <taxon>Aeromonadaceae</taxon>
        <taxon>Aeromonas</taxon>
    </lineage>
</organism>
<protein>
    <recommendedName>
        <fullName evidence="1">UPF0060 membrane protein AHA_2410</fullName>
    </recommendedName>
</protein>
<keyword id="KW-0997">Cell inner membrane</keyword>
<keyword id="KW-1003">Cell membrane</keyword>
<keyword id="KW-0472">Membrane</keyword>
<keyword id="KW-1185">Reference proteome</keyword>
<keyword id="KW-0812">Transmembrane</keyword>
<keyword id="KW-1133">Transmembrane helix</keyword>
<reference key="1">
    <citation type="journal article" date="2006" name="J. Bacteriol.">
        <title>Genome sequence of Aeromonas hydrophila ATCC 7966T: jack of all trades.</title>
        <authorList>
            <person name="Seshadri R."/>
            <person name="Joseph S.W."/>
            <person name="Chopra A.K."/>
            <person name="Sha J."/>
            <person name="Shaw J."/>
            <person name="Graf J."/>
            <person name="Haft D.H."/>
            <person name="Wu M."/>
            <person name="Ren Q."/>
            <person name="Rosovitz M.J."/>
            <person name="Madupu R."/>
            <person name="Tallon L."/>
            <person name="Kim M."/>
            <person name="Jin S."/>
            <person name="Vuong H."/>
            <person name="Stine O.C."/>
            <person name="Ali A."/>
            <person name="Horneman A.J."/>
            <person name="Heidelberg J.F."/>
        </authorList>
    </citation>
    <scope>NUCLEOTIDE SEQUENCE [LARGE SCALE GENOMIC DNA]</scope>
    <source>
        <strain>ATCC 7966 / DSM 30187 / BCRC 13018 / CCUG 14551 / JCM 1027 / KCTC 2358 / NCIMB 9240 / NCTC 8049</strain>
    </source>
</reference>
<proteinExistence type="inferred from homology"/>
<comment type="subcellular location">
    <subcellularLocation>
        <location evidence="1">Cell inner membrane</location>
        <topology evidence="1">Multi-pass membrane protein</topology>
    </subcellularLocation>
</comment>
<comment type="similarity">
    <text evidence="1">Belongs to the UPF0060 family.</text>
</comment>